<organism>
    <name type="scientific">Rickettsia canadensis (strain McKiel)</name>
    <dbReference type="NCBI Taxonomy" id="293613"/>
    <lineage>
        <taxon>Bacteria</taxon>
        <taxon>Pseudomonadati</taxon>
        <taxon>Pseudomonadota</taxon>
        <taxon>Alphaproteobacteria</taxon>
        <taxon>Rickettsiales</taxon>
        <taxon>Rickettsiaceae</taxon>
        <taxon>Rickettsieae</taxon>
        <taxon>Rickettsia</taxon>
        <taxon>belli group</taxon>
    </lineage>
</organism>
<protein>
    <recommendedName>
        <fullName evidence="1">Large ribosomal subunit protein bL35</fullName>
    </recommendedName>
    <alternativeName>
        <fullName evidence="2">50S ribosomal protein L35</fullName>
    </alternativeName>
</protein>
<sequence length="68" mass="7774">MPKLKTKSAAKKRFKLTASGNVIASQAGKKHFMRRRTKAQIRNLRGTTILCNQEGYNIKKYFLPYGTN</sequence>
<comment type="similarity">
    <text evidence="1">Belongs to the bacterial ribosomal protein bL35 family.</text>
</comment>
<feature type="chain" id="PRO_1000050757" description="Large ribosomal subunit protein bL35">
    <location>
        <begin position="1"/>
        <end position="68"/>
    </location>
</feature>
<accession>A8EY62</accession>
<keyword id="KW-0687">Ribonucleoprotein</keyword>
<keyword id="KW-0689">Ribosomal protein</keyword>
<name>RL35_RICCK</name>
<dbReference type="EMBL" id="CP000409">
    <property type="protein sequence ID" value="ABV73295.1"/>
    <property type="molecule type" value="Genomic_DNA"/>
</dbReference>
<dbReference type="RefSeq" id="WP_012148494.1">
    <property type="nucleotide sequence ID" value="NC_009879.1"/>
</dbReference>
<dbReference type="SMR" id="A8EY62"/>
<dbReference type="STRING" id="293613.A1E_01750"/>
<dbReference type="KEGG" id="rcm:A1E_01750"/>
<dbReference type="eggNOG" id="COG0291">
    <property type="taxonomic scope" value="Bacteria"/>
</dbReference>
<dbReference type="HOGENOM" id="CLU_169643_2_1_5"/>
<dbReference type="Proteomes" id="UP000007056">
    <property type="component" value="Chromosome"/>
</dbReference>
<dbReference type="GO" id="GO:0022625">
    <property type="term" value="C:cytosolic large ribosomal subunit"/>
    <property type="evidence" value="ECO:0007669"/>
    <property type="project" value="TreeGrafter"/>
</dbReference>
<dbReference type="GO" id="GO:0003735">
    <property type="term" value="F:structural constituent of ribosome"/>
    <property type="evidence" value="ECO:0007669"/>
    <property type="project" value="InterPro"/>
</dbReference>
<dbReference type="GO" id="GO:0006412">
    <property type="term" value="P:translation"/>
    <property type="evidence" value="ECO:0007669"/>
    <property type="project" value="UniProtKB-UniRule"/>
</dbReference>
<dbReference type="FunFam" id="4.10.410.60:FF:000001">
    <property type="entry name" value="50S ribosomal protein L35"/>
    <property type="match status" value="1"/>
</dbReference>
<dbReference type="Gene3D" id="4.10.410.60">
    <property type="match status" value="1"/>
</dbReference>
<dbReference type="HAMAP" id="MF_00514">
    <property type="entry name" value="Ribosomal_bL35"/>
    <property type="match status" value="1"/>
</dbReference>
<dbReference type="InterPro" id="IPR001706">
    <property type="entry name" value="Ribosomal_bL35"/>
</dbReference>
<dbReference type="InterPro" id="IPR021137">
    <property type="entry name" value="Ribosomal_bL35-like"/>
</dbReference>
<dbReference type="InterPro" id="IPR018265">
    <property type="entry name" value="Ribosomal_bL35_CS"/>
</dbReference>
<dbReference type="InterPro" id="IPR037229">
    <property type="entry name" value="Ribosomal_bL35_sf"/>
</dbReference>
<dbReference type="NCBIfam" id="TIGR00001">
    <property type="entry name" value="rpmI_bact"/>
    <property type="match status" value="1"/>
</dbReference>
<dbReference type="PANTHER" id="PTHR33343">
    <property type="entry name" value="54S RIBOSOMAL PROTEIN BL35M"/>
    <property type="match status" value="1"/>
</dbReference>
<dbReference type="PANTHER" id="PTHR33343:SF1">
    <property type="entry name" value="LARGE RIBOSOMAL SUBUNIT PROTEIN BL35M"/>
    <property type="match status" value="1"/>
</dbReference>
<dbReference type="Pfam" id="PF01632">
    <property type="entry name" value="Ribosomal_L35p"/>
    <property type="match status" value="1"/>
</dbReference>
<dbReference type="PRINTS" id="PR00064">
    <property type="entry name" value="RIBOSOMALL35"/>
</dbReference>
<dbReference type="SUPFAM" id="SSF143034">
    <property type="entry name" value="L35p-like"/>
    <property type="match status" value="1"/>
</dbReference>
<dbReference type="PROSITE" id="PS00936">
    <property type="entry name" value="RIBOSOMAL_L35"/>
    <property type="match status" value="1"/>
</dbReference>
<reference key="1">
    <citation type="submission" date="2007-09" db="EMBL/GenBank/DDBJ databases">
        <title>Complete genome sequence of Rickettsia canadensis.</title>
        <authorList>
            <person name="Madan A."/>
            <person name="Fahey J."/>
            <person name="Helton E."/>
            <person name="Ketteman M."/>
            <person name="Madan A."/>
            <person name="Rodrigues S."/>
            <person name="Sanchez A."/>
            <person name="Whiting M."/>
            <person name="Dasch G."/>
            <person name="Eremeeva M."/>
        </authorList>
    </citation>
    <scope>NUCLEOTIDE SEQUENCE [LARGE SCALE GENOMIC DNA]</scope>
    <source>
        <strain>McKiel</strain>
    </source>
</reference>
<proteinExistence type="inferred from homology"/>
<evidence type="ECO:0000255" key="1">
    <source>
        <dbReference type="HAMAP-Rule" id="MF_00514"/>
    </source>
</evidence>
<evidence type="ECO:0000305" key="2"/>
<gene>
    <name evidence="1" type="primary">rpmI</name>
    <name type="ordered locus">A1E_01750</name>
</gene>